<comment type="function">
    <text>The M protein has a crucial role in virus assembly and interacts with the RNP complex as well as with the viral membrane.</text>
</comment>
<comment type="interaction">
    <interactant intactId="EBI-25764833">
        <id>P11206</id>
    </interactant>
    <interactant intactId="EBI-25764833">
        <id>P11206</id>
        <label>M</label>
    </interactant>
    <organismsDiffer>false</organismsDiffer>
    <experiments>3</experiments>
</comment>
<comment type="subcellular location">
    <subcellularLocation>
        <location evidence="2">Virion</location>
    </subcellularLocation>
</comment>
<comment type="domain">
    <text evidence="1">Late-budding domains (L domains) are short sequence motifs essential for viral particle budding. They recruit proteins of the host ESCRT machinery (Endosomal Sorting Complex Required for Transport) or ESCRT-associated proteins. The matrix protein contains one L domain: a FPIV motif (By similarity).</text>
</comment>
<comment type="similarity">
    <text evidence="2">Belongs to the morbillivirus/respirovirus/rubulavirus M protein family.</text>
</comment>
<protein>
    <recommendedName>
        <fullName>Matrix protein</fullName>
    </recommendedName>
</protein>
<sequence>MDSSRTIGLYFDSALPSSNLLAFPIVLQDIGDGKKQIAPQYRIQRLDSWTDSKEDSVFITTYGFIFQVGNEEVTVGMISDNPKHELLSAAMLCLGSVPNVGDLVELARACLTMVVTCKKSATDTERMVFSVVQAPQVLQSCRVVANKYSSVNAVKHVKAPEKIPGSGTLEYKVNFVSLTVVPRKDVYKIPTAALKVSGSSLYNLALNVTIDVEVDPKSPLVKSLSKSDSGYYANLFLHIGLMSTVDKKGKKVTFDKLERKIRRLDLSVGLSDVLGPSVLVKARGARTRLLAPFFSSSGTACYPISNASPQVAKILWSQTARLRSVKVIIQAGTQRAVAVTADHEVTSTKIEKRHTIAKYNPFKK</sequence>
<proteinExistence type="evidence at protein level"/>
<dbReference type="EMBL" id="M16622">
    <property type="protein sequence ID" value="AAA46673.1"/>
    <property type="molecule type" value="mRNA"/>
</dbReference>
<dbReference type="PIR" id="A27530">
    <property type="entry name" value="MFNZNV"/>
</dbReference>
<dbReference type="PDB" id="4G1G">
    <property type="method" value="X-ray"/>
    <property type="resolution" value="2.20 A"/>
    <property type="chains" value="A/B=1-364"/>
</dbReference>
<dbReference type="PDB" id="4G1L">
    <property type="method" value="X-ray"/>
    <property type="resolution" value="2.21 A"/>
    <property type="chains" value="A/B=1-364"/>
</dbReference>
<dbReference type="PDB" id="4G1O">
    <property type="method" value="X-ray"/>
    <property type="resolution" value="2.20 A"/>
    <property type="chains" value="A/B=1-364"/>
</dbReference>
<dbReference type="PDBsum" id="4G1G"/>
<dbReference type="PDBsum" id="4G1L"/>
<dbReference type="PDBsum" id="4G1O"/>
<dbReference type="SASBDB" id="P11206"/>
<dbReference type="SMR" id="P11206"/>
<dbReference type="EvolutionaryTrace" id="P11206"/>
<dbReference type="GO" id="GO:0019031">
    <property type="term" value="C:viral envelope"/>
    <property type="evidence" value="ECO:0007669"/>
    <property type="project" value="UniProtKB-KW"/>
</dbReference>
<dbReference type="GO" id="GO:0042802">
    <property type="term" value="F:identical protein binding"/>
    <property type="evidence" value="ECO:0000353"/>
    <property type="project" value="IntAct"/>
</dbReference>
<dbReference type="GO" id="GO:0039660">
    <property type="term" value="F:structural constituent of virion"/>
    <property type="evidence" value="ECO:0007669"/>
    <property type="project" value="UniProtKB-KW"/>
</dbReference>
<dbReference type="GO" id="GO:0039702">
    <property type="term" value="P:viral budding via host ESCRT complex"/>
    <property type="evidence" value="ECO:0007669"/>
    <property type="project" value="UniProtKB-KW"/>
</dbReference>
<dbReference type="FunFam" id="2.70.20.50:FF:000002">
    <property type="entry name" value="Matrix protein"/>
    <property type="match status" value="1"/>
</dbReference>
<dbReference type="FunFam" id="2.70.20.60:FF:000002">
    <property type="entry name" value="Matrix protein"/>
    <property type="match status" value="1"/>
</dbReference>
<dbReference type="Gene3D" id="2.70.20.60">
    <property type="entry name" value="Viral matrix protein, C-terminal domain"/>
    <property type="match status" value="1"/>
</dbReference>
<dbReference type="Gene3D" id="2.70.20.50">
    <property type="entry name" value="Viral matrix protein, N-terminal domain"/>
    <property type="match status" value="1"/>
</dbReference>
<dbReference type="InterPro" id="IPR042539">
    <property type="entry name" value="Matrix_C"/>
</dbReference>
<dbReference type="InterPro" id="IPR042540">
    <property type="entry name" value="Matrix_N"/>
</dbReference>
<dbReference type="InterPro" id="IPR055413">
    <property type="entry name" value="Matrix_Paramyxo_C"/>
</dbReference>
<dbReference type="InterPro" id="IPR000982">
    <property type="entry name" value="Matrix_Paramyxo_N"/>
</dbReference>
<dbReference type="Pfam" id="PF23765">
    <property type="entry name" value="Matrix_Paramyxo_C"/>
    <property type="match status" value="1"/>
</dbReference>
<dbReference type="Pfam" id="PF00661">
    <property type="entry name" value="Matrix_Paramyxo_N"/>
    <property type="match status" value="1"/>
</dbReference>
<organismHost>
    <name type="scientific">Gallus gallus</name>
    <name type="common">Chicken</name>
    <dbReference type="NCBI Taxonomy" id="9031"/>
</organismHost>
<organism>
    <name type="scientific">Newcastle disease virus (strain Chicken/Australia-Victoria/32)</name>
    <name type="common">NDV</name>
    <dbReference type="NCBI Taxonomy" id="11177"/>
    <lineage>
        <taxon>Viruses</taxon>
        <taxon>Riboviria</taxon>
        <taxon>Orthornavirae</taxon>
        <taxon>Negarnaviricota</taxon>
        <taxon>Haploviricotina</taxon>
        <taxon>Monjiviricetes</taxon>
        <taxon>Mononegavirales</taxon>
        <taxon>Paramyxoviridae</taxon>
        <taxon>Avulavirinae</taxon>
        <taxon>Orthoavulavirus</taxon>
        <taxon>Orthoavulavirus javaense</taxon>
        <taxon>Avian paramyxovirus 1</taxon>
    </lineage>
</organism>
<name>MATRX_NDVA</name>
<reference key="1">
    <citation type="journal article" date="1987" name="Virology">
        <title>The nucleotide sequence of the gene encoding the Newcastle disease virus membrane protein and comparisons of membrane protein sequences.</title>
        <authorList>
            <person name="McGinnes L.W."/>
            <person name="Morrison T.G."/>
        </authorList>
    </citation>
    <scope>NUCLEOTIDE SEQUENCE [MRNA]</scope>
</reference>
<gene>
    <name type="primary">M</name>
</gene>
<accession>P11206</accession>
<evidence type="ECO:0000250" key="1"/>
<evidence type="ECO:0000305" key="2"/>
<evidence type="ECO:0007829" key="3">
    <source>
        <dbReference type="PDB" id="4G1G"/>
    </source>
</evidence>
<evidence type="ECO:0007829" key="4">
    <source>
        <dbReference type="PDB" id="4G1L"/>
    </source>
</evidence>
<evidence type="ECO:0007829" key="5">
    <source>
        <dbReference type="PDB" id="4G1O"/>
    </source>
</evidence>
<feature type="chain" id="PRO_0000142759" description="Matrix protein">
    <location>
        <begin position="1"/>
        <end position="364"/>
    </location>
</feature>
<feature type="short sequence motif" description="FPIV motif" evidence="1">
    <location>
        <begin position="23"/>
        <end position="26"/>
    </location>
</feature>
<feature type="helix" evidence="3">
    <location>
        <begin position="17"/>
        <end position="22"/>
    </location>
</feature>
<feature type="strand" evidence="4">
    <location>
        <begin position="25"/>
        <end position="28"/>
    </location>
</feature>
<feature type="turn" evidence="3">
    <location>
        <begin position="32"/>
        <end position="34"/>
    </location>
</feature>
<feature type="strand" evidence="3">
    <location>
        <begin position="40"/>
        <end position="45"/>
    </location>
</feature>
<feature type="turn" evidence="5">
    <location>
        <begin position="47"/>
        <end position="49"/>
    </location>
</feature>
<feature type="strand" evidence="3">
    <location>
        <begin position="50"/>
        <end position="52"/>
    </location>
</feature>
<feature type="strand" evidence="3">
    <location>
        <begin position="55"/>
        <end position="67"/>
    </location>
</feature>
<feature type="strand" evidence="3">
    <location>
        <begin position="85"/>
        <end position="99"/>
    </location>
</feature>
<feature type="helix" evidence="3">
    <location>
        <begin position="103"/>
        <end position="110"/>
    </location>
</feature>
<feature type="strand" evidence="3">
    <location>
        <begin position="114"/>
        <end position="133"/>
    </location>
</feature>
<feature type="helix" evidence="3">
    <location>
        <begin position="136"/>
        <end position="138"/>
    </location>
</feature>
<feature type="helix" evidence="3">
    <location>
        <begin position="142"/>
        <end position="146"/>
    </location>
</feature>
<feature type="strand" evidence="3">
    <location>
        <begin position="148"/>
        <end position="152"/>
    </location>
</feature>
<feature type="helix" evidence="3">
    <location>
        <begin position="153"/>
        <end position="156"/>
    </location>
</feature>
<feature type="helix" evidence="3">
    <location>
        <begin position="160"/>
        <end position="162"/>
    </location>
</feature>
<feature type="strand" evidence="3">
    <location>
        <begin position="165"/>
        <end position="167"/>
    </location>
</feature>
<feature type="strand" evidence="3">
    <location>
        <begin position="169"/>
        <end position="182"/>
    </location>
</feature>
<feature type="helix" evidence="3">
    <location>
        <begin position="183"/>
        <end position="186"/>
    </location>
</feature>
<feature type="helix" evidence="3">
    <location>
        <begin position="191"/>
        <end position="195"/>
    </location>
</feature>
<feature type="strand" evidence="3">
    <location>
        <begin position="201"/>
        <end position="212"/>
    </location>
</feature>
<feature type="helix" evidence="3">
    <location>
        <begin position="221"/>
        <end position="223"/>
    </location>
</feature>
<feature type="strand" evidence="3">
    <location>
        <begin position="224"/>
        <end position="226"/>
    </location>
</feature>
<feature type="strand" evidence="3">
    <location>
        <begin position="228"/>
        <end position="246"/>
    </location>
</feature>
<feature type="strand" evidence="3">
    <location>
        <begin position="249"/>
        <end position="251"/>
    </location>
</feature>
<feature type="strand" evidence="3">
    <location>
        <begin position="254"/>
        <end position="256"/>
    </location>
</feature>
<feature type="helix" evidence="3">
    <location>
        <begin position="257"/>
        <end position="264"/>
    </location>
</feature>
<feature type="strand" evidence="3">
    <location>
        <begin position="266"/>
        <end position="282"/>
    </location>
</feature>
<feature type="turn" evidence="3">
    <location>
        <begin position="288"/>
        <end position="290"/>
    </location>
</feature>
<feature type="helix" evidence="3">
    <location>
        <begin position="291"/>
        <end position="293"/>
    </location>
</feature>
<feature type="strand" evidence="3">
    <location>
        <begin position="298"/>
        <end position="303"/>
    </location>
</feature>
<feature type="helix" evidence="3">
    <location>
        <begin position="304"/>
        <end position="307"/>
    </location>
</feature>
<feature type="helix" evidence="3">
    <location>
        <begin position="309"/>
        <end position="317"/>
    </location>
</feature>
<feature type="strand" evidence="3">
    <location>
        <begin position="320"/>
        <end position="333"/>
    </location>
</feature>
<feature type="helix" evidence="3">
    <location>
        <begin position="334"/>
        <end position="339"/>
    </location>
</feature>
<feature type="strand" evidence="5">
    <location>
        <begin position="343"/>
        <end position="347"/>
    </location>
</feature>
<keyword id="KW-0002">3D-structure</keyword>
<keyword id="KW-0945">Host-virus interaction</keyword>
<keyword id="KW-1198">Viral budding</keyword>
<keyword id="KW-1187">Viral budding via the host ESCRT complexes</keyword>
<keyword id="KW-0261">Viral envelope protein</keyword>
<keyword id="KW-0468">Viral matrix protein</keyword>
<keyword id="KW-1188">Viral release from host cell</keyword>
<keyword id="KW-0946">Virion</keyword>